<name>AMZA_NANEQ</name>
<evidence type="ECO:0000255" key="1">
    <source>
        <dbReference type="HAMAP-Rule" id="MF_01842"/>
    </source>
</evidence>
<gene>
    <name evidence="1" type="primary">amzA</name>
    <name type="ordered locus">NEQ451</name>
</gene>
<comment type="function">
    <text evidence="1">Probable zinc metalloprotease whose natural substrate is unknown.</text>
</comment>
<comment type="cofactor">
    <cofactor evidence="1">
        <name>Zn(2+)</name>
        <dbReference type="ChEBI" id="CHEBI:29105"/>
    </cofactor>
    <text evidence="1">Binds 2 Zn(2+) ions per subunit. One is catalytic, whereas the other seems to have a structural role.</text>
</comment>
<comment type="subunit">
    <text evidence="1">Monomer.</text>
</comment>
<comment type="similarity">
    <text evidence="1">Belongs to the peptidase M54 family.</text>
</comment>
<sequence>MLLYLVNFQSMWANYVLELLKDAFAFKIKAKELDIPLAAYNPFRKQFSAQLLLDYVVERYKDGLVFAIIDEDIYDSNYNFVFGLAYPFRGAIVSTYRLKNFERIKKEVLHEMGHVFGLGHCNNYCVMRFSNSVFEVDEKPDKYCENCYREILNNGFYVNPKYVIFKENYN</sequence>
<reference key="1">
    <citation type="journal article" date="2003" name="Proc. Natl. Acad. Sci. U.S.A.">
        <title>The genome of Nanoarchaeum equitans: insights into early archaeal evolution and derived parasitism.</title>
        <authorList>
            <person name="Waters E."/>
            <person name="Hohn M.J."/>
            <person name="Ahel I."/>
            <person name="Graham D.E."/>
            <person name="Adams M.D."/>
            <person name="Barnstead M."/>
            <person name="Beeson K.Y."/>
            <person name="Bibbs L."/>
            <person name="Bolanos R."/>
            <person name="Keller M."/>
            <person name="Kretz K."/>
            <person name="Lin X."/>
            <person name="Mathur E."/>
            <person name="Ni J."/>
            <person name="Podar M."/>
            <person name="Richardson T."/>
            <person name="Sutton G.G."/>
            <person name="Simon M."/>
            <person name="Soell D."/>
            <person name="Stetter K.O."/>
            <person name="Short J.M."/>
            <person name="Noorderwier M."/>
        </authorList>
    </citation>
    <scope>NUCLEOTIDE SEQUENCE [LARGE SCALE GENOMIC DNA]</scope>
    <source>
        <strain>Kin4-M</strain>
    </source>
</reference>
<feature type="chain" id="PRO_0000159628" description="Archaemetzincin">
    <location>
        <begin position="1"/>
        <end position="170"/>
    </location>
</feature>
<feature type="active site" description="Proton acceptor" evidence="1">
    <location>
        <position position="111"/>
    </location>
</feature>
<feature type="binding site" evidence="1">
    <location>
        <position position="110"/>
    </location>
    <ligand>
        <name>Zn(2+)</name>
        <dbReference type="ChEBI" id="CHEBI:29105"/>
        <label>1</label>
        <note>catalytic</note>
    </ligand>
</feature>
<feature type="binding site" evidence="1">
    <location>
        <position position="114"/>
    </location>
    <ligand>
        <name>Zn(2+)</name>
        <dbReference type="ChEBI" id="CHEBI:29105"/>
        <label>1</label>
        <note>catalytic</note>
    </ligand>
</feature>
<feature type="binding site" evidence="1">
    <location>
        <position position="120"/>
    </location>
    <ligand>
        <name>Zn(2+)</name>
        <dbReference type="ChEBI" id="CHEBI:29105"/>
        <label>1</label>
        <note>catalytic</note>
    </ligand>
</feature>
<feature type="binding site" evidence="1">
    <location>
        <position position="121"/>
    </location>
    <ligand>
        <name>Zn(2+)</name>
        <dbReference type="ChEBI" id="CHEBI:29105"/>
        <label>2</label>
    </ligand>
</feature>
<feature type="binding site" evidence="1">
    <location>
        <position position="125"/>
    </location>
    <ligand>
        <name>Zn(2+)</name>
        <dbReference type="ChEBI" id="CHEBI:29105"/>
        <label>2</label>
    </ligand>
</feature>
<feature type="binding site" evidence="1">
    <location>
        <position position="144"/>
    </location>
    <ligand>
        <name>Zn(2+)</name>
        <dbReference type="ChEBI" id="CHEBI:29105"/>
        <label>2</label>
    </ligand>
</feature>
<feature type="binding site" evidence="1">
    <location>
        <position position="147"/>
    </location>
    <ligand>
        <name>Zn(2+)</name>
        <dbReference type="ChEBI" id="CHEBI:29105"/>
        <label>2</label>
    </ligand>
</feature>
<accession>Q74M83</accession>
<dbReference type="EC" id="3.4.-.-" evidence="1"/>
<dbReference type="EMBL" id="AE017199">
    <property type="protein sequence ID" value="AAR39295.1"/>
    <property type="molecule type" value="Genomic_DNA"/>
</dbReference>
<dbReference type="SMR" id="Q74M83"/>
<dbReference type="STRING" id="228908.NEQ451"/>
<dbReference type="EnsemblBacteria" id="AAR39295">
    <property type="protein sequence ID" value="AAR39295"/>
    <property type="gene ID" value="NEQ451"/>
</dbReference>
<dbReference type="KEGG" id="neq:NEQ451"/>
<dbReference type="HOGENOM" id="CLU_108521_1_0_2"/>
<dbReference type="Proteomes" id="UP000000578">
    <property type="component" value="Chromosome"/>
</dbReference>
<dbReference type="GO" id="GO:0008237">
    <property type="term" value="F:metallopeptidase activity"/>
    <property type="evidence" value="ECO:0007669"/>
    <property type="project" value="UniProtKB-UniRule"/>
</dbReference>
<dbReference type="GO" id="GO:0008270">
    <property type="term" value="F:zinc ion binding"/>
    <property type="evidence" value="ECO:0007669"/>
    <property type="project" value="UniProtKB-UniRule"/>
</dbReference>
<dbReference type="GO" id="GO:0006508">
    <property type="term" value="P:proteolysis"/>
    <property type="evidence" value="ECO:0007669"/>
    <property type="project" value="UniProtKB-UniRule"/>
</dbReference>
<dbReference type="CDD" id="cd11375">
    <property type="entry name" value="Peptidase_M54"/>
    <property type="match status" value="1"/>
</dbReference>
<dbReference type="Gene3D" id="3.40.390.10">
    <property type="entry name" value="Collagenase (Catalytic Domain)"/>
    <property type="match status" value="1"/>
</dbReference>
<dbReference type="HAMAP" id="MF_01842">
    <property type="entry name" value="Archaemetzincin"/>
    <property type="match status" value="1"/>
</dbReference>
<dbReference type="InterPro" id="IPR024079">
    <property type="entry name" value="MetalloPept_cat_dom_sf"/>
</dbReference>
<dbReference type="InterPro" id="IPR012962">
    <property type="entry name" value="Pept_M54_archaemetzincn"/>
</dbReference>
<dbReference type="InterPro" id="IPR012091">
    <property type="entry name" value="Pept_M54_archaemetzncn_arc/bac"/>
</dbReference>
<dbReference type="PANTHER" id="PTHR15910">
    <property type="entry name" value="ARCHAEMETZINCIN"/>
    <property type="match status" value="1"/>
</dbReference>
<dbReference type="PANTHER" id="PTHR15910:SF1">
    <property type="entry name" value="ARCHAEMETZINCIN-2"/>
    <property type="match status" value="1"/>
</dbReference>
<dbReference type="Pfam" id="PF07998">
    <property type="entry name" value="Peptidase_M54"/>
    <property type="match status" value="1"/>
</dbReference>
<dbReference type="PIRSF" id="PIRSF005785">
    <property type="entry name" value="Zn-prot_arch"/>
    <property type="match status" value="1"/>
</dbReference>
<dbReference type="SUPFAM" id="SSF55486">
    <property type="entry name" value="Metalloproteases ('zincins'), catalytic domain"/>
    <property type="match status" value="1"/>
</dbReference>
<keyword id="KW-0378">Hydrolase</keyword>
<keyword id="KW-0479">Metal-binding</keyword>
<keyword id="KW-0482">Metalloprotease</keyword>
<keyword id="KW-0645">Protease</keyword>
<keyword id="KW-1185">Reference proteome</keyword>
<keyword id="KW-0862">Zinc</keyword>
<protein>
    <recommendedName>
        <fullName evidence="1">Archaemetzincin</fullName>
        <ecNumber evidence="1">3.4.-.-</ecNumber>
    </recommendedName>
</protein>
<organism>
    <name type="scientific">Nanoarchaeum equitans (strain Kin4-M)</name>
    <dbReference type="NCBI Taxonomy" id="228908"/>
    <lineage>
        <taxon>Archaea</taxon>
        <taxon>Nanobdellota</taxon>
        <taxon>Candidatus Nanoarchaeia</taxon>
        <taxon>Nanoarchaeales</taxon>
        <taxon>Nanoarchaeaceae</taxon>
        <taxon>Nanoarchaeum</taxon>
    </lineage>
</organism>
<proteinExistence type="inferred from homology"/>